<gene>
    <name evidence="1" type="primary">fusA</name>
    <name type="ordered locus">CLJ_B3792</name>
</gene>
<comment type="function">
    <text evidence="1">Catalyzes the GTP-dependent ribosomal translocation step during translation elongation. During this step, the ribosome changes from the pre-translocational (PRE) to the post-translocational (POST) state as the newly formed A-site-bound peptidyl-tRNA and P-site-bound deacylated tRNA move to the P and E sites, respectively. Catalyzes the coordinated movement of the two tRNA molecules, the mRNA and conformational changes in the ribosome.</text>
</comment>
<comment type="subcellular location">
    <subcellularLocation>
        <location evidence="1">Cytoplasm</location>
    </subcellularLocation>
</comment>
<comment type="similarity">
    <text evidence="1">Belongs to the TRAFAC class translation factor GTPase superfamily. Classic translation factor GTPase family. EF-G/EF-2 subfamily.</text>
</comment>
<protein>
    <recommendedName>
        <fullName evidence="1">Elongation factor G</fullName>
        <shortName evidence="1">EF-G</shortName>
    </recommendedName>
</protein>
<feature type="chain" id="PRO_1000202297" description="Elongation factor G">
    <location>
        <begin position="1"/>
        <end position="689"/>
    </location>
</feature>
<feature type="domain" description="tr-type G">
    <location>
        <begin position="9"/>
        <end position="283"/>
    </location>
</feature>
<feature type="binding site" evidence="1">
    <location>
        <begin position="18"/>
        <end position="25"/>
    </location>
    <ligand>
        <name>GTP</name>
        <dbReference type="ChEBI" id="CHEBI:37565"/>
    </ligand>
</feature>
<feature type="binding site" evidence="1">
    <location>
        <begin position="82"/>
        <end position="86"/>
    </location>
    <ligand>
        <name>GTP</name>
        <dbReference type="ChEBI" id="CHEBI:37565"/>
    </ligand>
</feature>
<feature type="binding site" evidence="1">
    <location>
        <begin position="136"/>
        <end position="139"/>
    </location>
    <ligand>
        <name>GTP</name>
        <dbReference type="ChEBI" id="CHEBI:37565"/>
    </ligand>
</feature>
<evidence type="ECO:0000255" key="1">
    <source>
        <dbReference type="HAMAP-Rule" id="MF_00054"/>
    </source>
</evidence>
<name>EFG_CLOB6</name>
<dbReference type="EMBL" id="CP001083">
    <property type="protein sequence ID" value="ACQ53072.1"/>
    <property type="molecule type" value="Genomic_DNA"/>
</dbReference>
<dbReference type="RefSeq" id="WP_003360191.1">
    <property type="nucleotide sequence ID" value="NC_012658.1"/>
</dbReference>
<dbReference type="SMR" id="C3KVQ4"/>
<dbReference type="KEGG" id="cbi:CLJ_B3792"/>
<dbReference type="HOGENOM" id="CLU_002794_4_1_9"/>
<dbReference type="Proteomes" id="UP000002333">
    <property type="component" value="Chromosome"/>
</dbReference>
<dbReference type="GO" id="GO:0005737">
    <property type="term" value="C:cytoplasm"/>
    <property type="evidence" value="ECO:0007669"/>
    <property type="project" value="UniProtKB-SubCell"/>
</dbReference>
<dbReference type="GO" id="GO:0005525">
    <property type="term" value="F:GTP binding"/>
    <property type="evidence" value="ECO:0007669"/>
    <property type="project" value="UniProtKB-UniRule"/>
</dbReference>
<dbReference type="GO" id="GO:0003924">
    <property type="term" value="F:GTPase activity"/>
    <property type="evidence" value="ECO:0007669"/>
    <property type="project" value="InterPro"/>
</dbReference>
<dbReference type="GO" id="GO:0003746">
    <property type="term" value="F:translation elongation factor activity"/>
    <property type="evidence" value="ECO:0007669"/>
    <property type="project" value="UniProtKB-UniRule"/>
</dbReference>
<dbReference type="GO" id="GO:0032790">
    <property type="term" value="P:ribosome disassembly"/>
    <property type="evidence" value="ECO:0007669"/>
    <property type="project" value="TreeGrafter"/>
</dbReference>
<dbReference type="CDD" id="cd01886">
    <property type="entry name" value="EF-G"/>
    <property type="match status" value="1"/>
</dbReference>
<dbReference type="CDD" id="cd16262">
    <property type="entry name" value="EFG_III"/>
    <property type="match status" value="1"/>
</dbReference>
<dbReference type="CDD" id="cd01434">
    <property type="entry name" value="EFG_mtEFG1_IV"/>
    <property type="match status" value="1"/>
</dbReference>
<dbReference type="CDD" id="cd03713">
    <property type="entry name" value="EFG_mtEFG_C"/>
    <property type="match status" value="1"/>
</dbReference>
<dbReference type="CDD" id="cd04088">
    <property type="entry name" value="EFG_mtEFG_II"/>
    <property type="match status" value="1"/>
</dbReference>
<dbReference type="FunFam" id="2.40.30.10:FF:000006">
    <property type="entry name" value="Elongation factor G"/>
    <property type="match status" value="1"/>
</dbReference>
<dbReference type="FunFam" id="3.30.230.10:FF:000003">
    <property type="entry name" value="Elongation factor G"/>
    <property type="match status" value="1"/>
</dbReference>
<dbReference type="FunFam" id="3.30.70.240:FF:000001">
    <property type="entry name" value="Elongation factor G"/>
    <property type="match status" value="1"/>
</dbReference>
<dbReference type="FunFam" id="3.30.70.870:FF:000001">
    <property type="entry name" value="Elongation factor G"/>
    <property type="match status" value="1"/>
</dbReference>
<dbReference type="FunFam" id="3.40.50.300:FF:000029">
    <property type="entry name" value="Elongation factor G"/>
    <property type="match status" value="1"/>
</dbReference>
<dbReference type="Gene3D" id="3.30.230.10">
    <property type="match status" value="1"/>
</dbReference>
<dbReference type="Gene3D" id="3.30.70.240">
    <property type="match status" value="1"/>
</dbReference>
<dbReference type="Gene3D" id="3.30.70.870">
    <property type="entry name" value="Elongation Factor G (Translational Gtpase), domain 3"/>
    <property type="match status" value="1"/>
</dbReference>
<dbReference type="Gene3D" id="3.40.50.300">
    <property type="entry name" value="P-loop containing nucleotide triphosphate hydrolases"/>
    <property type="match status" value="1"/>
</dbReference>
<dbReference type="Gene3D" id="2.40.30.10">
    <property type="entry name" value="Translation factors"/>
    <property type="match status" value="1"/>
</dbReference>
<dbReference type="HAMAP" id="MF_00054_B">
    <property type="entry name" value="EF_G_EF_2_B"/>
    <property type="match status" value="1"/>
</dbReference>
<dbReference type="InterPro" id="IPR053905">
    <property type="entry name" value="EF-G-like_DII"/>
</dbReference>
<dbReference type="InterPro" id="IPR041095">
    <property type="entry name" value="EFG_II"/>
</dbReference>
<dbReference type="InterPro" id="IPR009022">
    <property type="entry name" value="EFG_III"/>
</dbReference>
<dbReference type="InterPro" id="IPR035647">
    <property type="entry name" value="EFG_III/V"/>
</dbReference>
<dbReference type="InterPro" id="IPR047872">
    <property type="entry name" value="EFG_IV"/>
</dbReference>
<dbReference type="InterPro" id="IPR035649">
    <property type="entry name" value="EFG_V"/>
</dbReference>
<dbReference type="InterPro" id="IPR000640">
    <property type="entry name" value="EFG_V-like"/>
</dbReference>
<dbReference type="InterPro" id="IPR031157">
    <property type="entry name" value="G_TR_CS"/>
</dbReference>
<dbReference type="InterPro" id="IPR027417">
    <property type="entry name" value="P-loop_NTPase"/>
</dbReference>
<dbReference type="InterPro" id="IPR020568">
    <property type="entry name" value="Ribosomal_Su5_D2-typ_SF"/>
</dbReference>
<dbReference type="InterPro" id="IPR014721">
    <property type="entry name" value="Ribsml_uS5_D2-typ_fold_subgr"/>
</dbReference>
<dbReference type="InterPro" id="IPR005225">
    <property type="entry name" value="Small_GTP-bd"/>
</dbReference>
<dbReference type="InterPro" id="IPR000795">
    <property type="entry name" value="T_Tr_GTP-bd_dom"/>
</dbReference>
<dbReference type="InterPro" id="IPR009000">
    <property type="entry name" value="Transl_B-barrel_sf"/>
</dbReference>
<dbReference type="InterPro" id="IPR004540">
    <property type="entry name" value="Transl_elong_EFG/EF2"/>
</dbReference>
<dbReference type="InterPro" id="IPR005517">
    <property type="entry name" value="Transl_elong_EFG/EF2_IV"/>
</dbReference>
<dbReference type="NCBIfam" id="TIGR00484">
    <property type="entry name" value="EF-G"/>
    <property type="match status" value="1"/>
</dbReference>
<dbReference type="NCBIfam" id="NF009379">
    <property type="entry name" value="PRK12740.1-3"/>
    <property type="match status" value="1"/>
</dbReference>
<dbReference type="NCBIfam" id="NF009381">
    <property type="entry name" value="PRK12740.1-5"/>
    <property type="match status" value="1"/>
</dbReference>
<dbReference type="NCBIfam" id="TIGR00231">
    <property type="entry name" value="small_GTP"/>
    <property type="match status" value="1"/>
</dbReference>
<dbReference type="PANTHER" id="PTHR43261:SF1">
    <property type="entry name" value="RIBOSOME-RELEASING FACTOR 2, MITOCHONDRIAL"/>
    <property type="match status" value="1"/>
</dbReference>
<dbReference type="PANTHER" id="PTHR43261">
    <property type="entry name" value="TRANSLATION ELONGATION FACTOR G-RELATED"/>
    <property type="match status" value="1"/>
</dbReference>
<dbReference type="Pfam" id="PF22042">
    <property type="entry name" value="EF-G_D2"/>
    <property type="match status" value="1"/>
</dbReference>
<dbReference type="Pfam" id="PF00679">
    <property type="entry name" value="EFG_C"/>
    <property type="match status" value="1"/>
</dbReference>
<dbReference type="Pfam" id="PF14492">
    <property type="entry name" value="EFG_III"/>
    <property type="match status" value="1"/>
</dbReference>
<dbReference type="Pfam" id="PF03764">
    <property type="entry name" value="EFG_IV"/>
    <property type="match status" value="1"/>
</dbReference>
<dbReference type="Pfam" id="PF00009">
    <property type="entry name" value="GTP_EFTU"/>
    <property type="match status" value="1"/>
</dbReference>
<dbReference type="PRINTS" id="PR00315">
    <property type="entry name" value="ELONGATNFCT"/>
</dbReference>
<dbReference type="SMART" id="SM00838">
    <property type="entry name" value="EFG_C"/>
    <property type="match status" value="1"/>
</dbReference>
<dbReference type="SMART" id="SM00889">
    <property type="entry name" value="EFG_IV"/>
    <property type="match status" value="1"/>
</dbReference>
<dbReference type="SUPFAM" id="SSF54980">
    <property type="entry name" value="EF-G C-terminal domain-like"/>
    <property type="match status" value="2"/>
</dbReference>
<dbReference type="SUPFAM" id="SSF52540">
    <property type="entry name" value="P-loop containing nucleoside triphosphate hydrolases"/>
    <property type="match status" value="1"/>
</dbReference>
<dbReference type="SUPFAM" id="SSF54211">
    <property type="entry name" value="Ribosomal protein S5 domain 2-like"/>
    <property type="match status" value="1"/>
</dbReference>
<dbReference type="SUPFAM" id="SSF50447">
    <property type="entry name" value="Translation proteins"/>
    <property type="match status" value="1"/>
</dbReference>
<dbReference type="PROSITE" id="PS00301">
    <property type="entry name" value="G_TR_1"/>
    <property type="match status" value="1"/>
</dbReference>
<dbReference type="PROSITE" id="PS51722">
    <property type="entry name" value="G_TR_2"/>
    <property type="match status" value="1"/>
</dbReference>
<organism>
    <name type="scientific">Clostridium botulinum (strain 657 / Type Ba4)</name>
    <dbReference type="NCBI Taxonomy" id="515621"/>
    <lineage>
        <taxon>Bacteria</taxon>
        <taxon>Bacillati</taxon>
        <taxon>Bacillota</taxon>
        <taxon>Clostridia</taxon>
        <taxon>Eubacteriales</taxon>
        <taxon>Clostridiaceae</taxon>
        <taxon>Clostridium</taxon>
    </lineage>
</organism>
<proteinExistence type="inferred from homology"/>
<accession>C3KVQ4</accession>
<reference key="1">
    <citation type="submission" date="2008-05" db="EMBL/GenBank/DDBJ databases">
        <title>Genome sequence of Clostridium botulinum Ba4 strain 657.</title>
        <authorList>
            <person name="Shrivastava S."/>
            <person name="Brown J.L."/>
            <person name="Bruce D."/>
            <person name="Detter C."/>
            <person name="Munk C."/>
            <person name="Smith L.A."/>
            <person name="Smith T.J."/>
            <person name="Sutton G."/>
            <person name="Brettin T.S."/>
        </authorList>
    </citation>
    <scope>NUCLEOTIDE SEQUENCE [LARGE SCALE GENOMIC DNA]</scope>
    <source>
        <strain>657 / Type Ba4</strain>
    </source>
</reference>
<keyword id="KW-0963">Cytoplasm</keyword>
<keyword id="KW-0251">Elongation factor</keyword>
<keyword id="KW-0342">GTP-binding</keyword>
<keyword id="KW-0547">Nucleotide-binding</keyword>
<keyword id="KW-0648">Protein biosynthesis</keyword>
<sequence>MANKEYPLAKFRNIGIMAHIDAGKTTATERILFYTGKTHKIGETHEGGATMDWMEQEQERGITITSAATTCFWKDHQVNIIDTPGHVDFTVEVERSLRVLDGAVTILDAKSGVEPQTETVWRQADNYKVPRMVFINKMDKLGADFLMSVGTLRERLHANAVPLQLPIGAEDAFSGIIDLVKNDAVIYKDDLGTVMDETEIPEDMKEMAEEYRTMLLEAVAEVDEDIMMKYLEGEEISVEEIKTALRKGVLANKIVPVLCGSAYKNKGVQLLLDAIIEFMPSPLDIEDVKGTEPTTGEEMTRPADAKAPLAALAFKIATDPFIGKLAFTRIYSGTMKNGTYVFNSNKGKRERIGRLMKMHANHREEVEELKAGDLGAIIGLKDTTTGDTLCDDADPIILENMEFPEPVIDVSIEPKTKAGQEKMGIALAKLAEEDPTFRTYTNQETGQTIIAGMGELHLEIIVDRLIREFKVECNVGQPQVAYKETVRKHVKAEGKFVRQSGGRGQYGHCWIEMMPTEGEYEFENAIVGGSIPKEYIPAIDNGIQEASQSGIIAGYPVINFKVKLFDGSYHDVDSSEMAFKIAGSMAFKNAMSKADAVLLEPSMKVEVVVPEEYMGDVIGDINSRRGRIEGMTPRAGAEVIRAFVPLSEMFGYATTLRSKTQGRGNYVMQFDHYEEVPKSIQDKVIGERK</sequence>